<gene>
    <name evidence="1" type="primary">rplF</name>
    <name type="synonym">rl6</name>
    <name type="ordered locus">CT_514</name>
</gene>
<reference key="1">
    <citation type="journal article" date="1991" name="J. Bacteriol.">
        <title>Isolation and molecular characterization of the ribosomal protein L6 homolog from Chlamydia trachomatis.</title>
        <authorList>
            <person name="Gray G."/>
            <person name="Kaul R."/>
            <person name="Roy K.L."/>
            <person name="Wenman W.M."/>
        </authorList>
    </citation>
    <scope>NUCLEOTIDE SEQUENCE [GENOMIC DNA]</scope>
    <source>
        <strain>L2</strain>
        <strain>Serovar J</strain>
    </source>
</reference>
<reference key="2">
    <citation type="journal article" date="1998" name="Science">
        <title>Genome sequence of an obligate intracellular pathogen of humans: Chlamydia trachomatis.</title>
        <authorList>
            <person name="Stephens R.S."/>
            <person name="Kalman S."/>
            <person name="Lammel C.J."/>
            <person name="Fan J."/>
            <person name="Marathe R."/>
            <person name="Aravind L."/>
            <person name="Mitchell W.P."/>
            <person name="Olinger L."/>
            <person name="Tatusov R.L."/>
            <person name="Zhao Q."/>
            <person name="Koonin E.V."/>
            <person name="Davis R.W."/>
        </authorList>
    </citation>
    <scope>NUCLEOTIDE SEQUENCE [LARGE SCALE GENOMIC DNA]</scope>
    <source>
        <strain>ATCC VR-885 / DSM 19411 / UW-3/Cx</strain>
    </source>
</reference>
<comment type="function">
    <text evidence="1">This protein binds to the 23S rRNA, and is important in its secondary structure. It is located near the subunit interface in the base of the L7/L12 stalk, and near the tRNA binding site of the peptidyltransferase center.</text>
</comment>
<comment type="subunit">
    <text evidence="1">Part of the 50S ribosomal subunit.</text>
</comment>
<comment type="similarity">
    <text evidence="1">Belongs to the universal ribosomal protein uL6 family.</text>
</comment>
<protein>
    <recommendedName>
        <fullName evidence="1">Large ribosomal subunit protein uL6</fullName>
    </recommendedName>
    <alternativeName>
        <fullName evidence="2">50S ribosomal protein L6</fullName>
    </alternativeName>
</protein>
<keyword id="KW-1185">Reference proteome</keyword>
<keyword id="KW-0687">Ribonucleoprotein</keyword>
<keyword id="KW-0689">Ribosomal protein</keyword>
<keyword id="KW-0694">RNA-binding</keyword>
<keyword id="KW-0699">rRNA-binding</keyword>
<name>RL6_CHLTR</name>
<organism>
    <name type="scientific">Chlamydia trachomatis serovar D (strain ATCC VR-885 / DSM 19411 / UW-3/Cx)</name>
    <dbReference type="NCBI Taxonomy" id="272561"/>
    <lineage>
        <taxon>Bacteria</taxon>
        <taxon>Pseudomonadati</taxon>
        <taxon>Chlamydiota</taxon>
        <taxon>Chlamydiia</taxon>
        <taxon>Chlamydiales</taxon>
        <taxon>Chlamydiaceae</taxon>
        <taxon>Chlamydia/Chlamydophila group</taxon>
        <taxon>Chlamydia</taxon>
    </lineage>
</organism>
<accession>P0CE01</accession>
<accession>O84520</accession>
<accession>P10553</accession>
<accession>P25056</accession>
<dbReference type="EMBL" id="M60652">
    <property type="protein sequence ID" value="AAA23166.1"/>
    <property type="molecule type" value="Genomic_DNA"/>
</dbReference>
<dbReference type="EMBL" id="AE001273">
    <property type="protein sequence ID" value="AAC68115.1"/>
    <property type="molecule type" value="Genomic_DNA"/>
</dbReference>
<dbReference type="PIR" id="A37315">
    <property type="entry name" value="A37315"/>
</dbReference>
<dbReference type="RefSeq" id="NP_220029.1">
    <property type="nucleotide sequence ID" value="NC_000117.1"/>
</dbReference>
<dbReference type="RefSeq" id="WP_009871878.1">
    <property type="nucleotide sequence ID" value="NC_000117.1"/>
</dbReference>
<dbReference type="SMR" id="P0CE01"/>
<dbReference type="FunCoup" id="P0CE01">
    <property type="interactions" value="276"/>
</dbReference>
<dbReference type="STRING" id="272561.CT_514"/>
<dbReference type="EnsemblBacteria" id="AAC68115">
    <property type="protein sequence ID" value="AAC68115"/>
    <property type="gene ID" value="CT_514"/>
</dbReference>
<dbReference type="GeneID" id="884293"/>
<dbReference type="KEGG" id="ctr:CT_514"/>
<dbReference type="PATRIC" id="fig|272561.5.peg.558"/>
<dbReference type="HOGENOM" id="CLU_065464_1_2_0"/>
<dbReference type="InParanoid" id="P0CE01"/>
<dbReference type="OrthoDB" id="9805007at2"/>
<dbReference type="Proteomes" id="UP000000431">
    <property type="component" value="Chromosome"/>
</dbReference>
<dbReference type="GO" id="GO:0022625">
    <property type="term" value="C:cytosolic large ribosomal subunit"/>
    <property type="evidence" value="ECO:0000318"/>
    <property type="project" value="GO_Central"/>
</dbReference>
<dbReference type="GO" id="GO:0019843">
    <property type="term" value="F:rRNA binding"/>
    <property type="evidence" value="ECO:0007669"/>
    <property type="project" value="UniProtKB-UniRule"/>
</dbReference>
<dbReference type="GO" id="GO:0003735">
    <property type="term" value="F:structural constituent of ribosome"/>
    <property type="evidence" value="ECO:0000318"/>
    <property type="project" value="GO_Central"/>
</dbReference>
<dbReference type="GO" id="GO:0002181">
    <property type="term" value="P:cytoplasmic translation"/>
    <property type="evidence" value="ECO:0000318"/>
    <property type="project" value="GO_Central"/>
</dbReference>
<dbReference type="FunFam" id="3.90.930.12:FF:000001">
    <property type="entry name" value="50S ribosomal protein L6"/>
    <property type="match status" value="1"/>
</dbReference>
<dbReference type="Gene3D" id="3.90.930.12">
    <property type="entry name" value="Ribosomal protein L6, alpha-beta domain"/>
    <property type="match status" value="2"/>
</dbReference>
<dbReference type="HAMAP" id="MF_01365_B">
    <property type="entry name" value="Ribosomal_uL6_B"/>
    <property type="match status" value="1"/>
</dbReference>
<dbReference type="InterPro" id="IPR000702">
    <property type="entry name" value="Ribosomal_uL6-like"/>
</dbReference>
<dbReference type="InterPro" id="IPR036789">
    <property type="entry name" value="Ribosomal_uL6-like_a/b-dom_sf"/>
</dbReference>
<dbReference type="InterPro" id="IPR020040">
    <property type="entry name" value="Ribosomal_uL6_a/b-dom"/>
</dbReference>
<dbReference type="InterPro" id="IPR019906">
    <property type="entry name" value="Ribosomal_uL6_bac-type"/>
</dbReference>
<dbReference type="InterPro" id="IPR002358">
    <property type="entry name" value="Ribosomal_uL6_CS"/>
</dbReference>
<dbReference type="NCBIfam" id="TIGR03654">
    <property type="entry name" value="L6_bact"/>
    <property type="match status" value="1"/>
</dbReference>
<dbReference type="PANTHER" id="PTHR11655">
    <property type="entry name" value="60S/50S RIBOSOMAL PROTEIN L6/L9"/>
    <property type="match status" value="1"/>
</dbReference>
<dbReference type="PANTHER" id="PTHR11655:SF14">
    <property type="entry name" value="LARGE RIBOSOMAL SUBUNIT PROTEIN UL6M"/>
    <property type="match status" value="1"/>
</dbReference>
<dbReference type="Pfam" id="PF00347">
    <property type="entry name" value="Ribosomal_L6"/>
    <property type="match status" value="2"/>
</dbReference>
<dbReference type="PIRSF" id="PIRSF002162">
    <property type="entry name" value="Ribosomal_L6"/>
    <property type="match status" value="1"/>
</dbReference>
<dbReference type="PRINTS" id="PR00059">
    <property type="entry name" value="RIBOSOMALL6"/>
</dbReference>
<dbReference type="SUPFAM" id="SSF56053">
    <property type="entry name" value="Ribosomal protein L6"/>
    <property type="match status" value="2"/>
</dbReference>
<dbReference type="PROSITE" id="PS00525">
    <property type="entry name" value="RIBOSOMAL_L6_1"/>
    <property type="match status" value="1"/>
</dbReference>
<evidence type="ECO:0000255" key="1">
    <source>
        <dbReference type="HAMAP-Rule" id="MF_01365"/>
    </source>
</evidence>
<evidence type="ECO:0000305" key="2"/>
<proteinExistence type="inferred from homology"/>
<feature type="chain" id="PRO_0000131046" description="Large ribosomal subunit protein uL6">
    <location>
        <begin position="1"/>
        <end position="183"/>
    </location>
</feature>
<feature type="sequence conflict" description="In Ref. 1; AAA23166." evidence="2" ref="1">
    <original>T</original>
    <variation>A</variation>
    <location>
        <position position="53"/>
    </location>
</feature>
<feature type="sequence conflict" description="In Ref. 1; AAA23166." evidence="2" ref="1">
    <original>I</original>
    <variation>M</variation>
    <location>
        <position position="65"/>
    </location>
</feature>
<sequence>MSRKARDPIVLPQGVEVSIQNDEISVKGPKGSLTQVLAKEVEIAVKGNEVFVTPAAHVVDRPGRIQGLYWALIANMVKGVHTGFEKRLEMIGVGFRAAVQGSLLDLSIGVSHPTKMPIPTGLEVSVEKNTLISIKGINKQLVGEFAACVRAKRPPEPYKGKGIRYENEYVRRKAGKAAKTGKK</sequence>